<keyword id="KW-0007">Acetylation</keyword>
<keyword id="KW-0067">ATP-binding</keyword>
<keyword id="KW-0963">Cytoplasm</keyword>
<keyword id="KW-0903">Direct protein sequencing</keyword>
<keyword id="KW-0488">Methylation</keyword>
<keyword id="KW-0547">Nucleotide-binding</keyword>
<keyword id="KW-0597">Phosphoprotein</keyword>
<keyword id="KW-1185">Reference proteome</keyword>
<keyword id="KW-0346">Stress response</keyword>
<reference key="1">
    <citation type="journal article" date="1999" name="J. Neurochem.">
        <title>Molecular cloning of a novel member of the HSP110 family of genes, ischemia-responsive protein 94 kDa (irp94), expressed in rat brain after transient forebrain ischemia.</title>
        <authorList>
            <person name="Yagita Y."/>
            <person name="Kitagawa K."/>
            <person name="Taguchi A."/>
            <person name="Ohtsuki T."/>
            <person name="Kuwabara K."/>
            <person name="Mabuchi T."/>
            <person name="Matsumoto M."/>
            <person name="Yanagihara T."/>
            <person name="Hori M."/>
        </authorList>
    </citation>
    <scope>NUCLEOTIDE SEQUENCE [MRNA]</scope>
    <scope>TISSUE SPECIFICITY</scope>
    <scope>INDUCTION</scope>
    <source>
        <strain>Sprague-Dawley</strain>
        <tissue>Hippocampus</tissue>
    </source>
</reference>
<reference key="2">
    <citation type="submission" date="2007-04" db="UniProtKB">
        <authorList>
            <person name="Lubec G."/>
            <person name="Chen W.-Q."/>
            <person name="Afjehi-Sadat L."/>
        </authorList>
    </citation>
    <scope>PROTEIN SEQUENCE OF 391-405; 574-591 AND 619-629</scope>
    <scope>IDENTIFICATION BY MASS SPECTROMETRY</scope>
    <source>
        <strain>Sprague-Dawley</strain>
        <tissue>Hippocampus</tissue>
        <tissue>Spinal cord</tissue>
    </source>
</reference>
<reference key="3">
    <citation type="journal article" date="2012" name="Nat. Commun.">
        <title>Quantitative maps of protein phosphorylation sites across 14 different rat organs and tissues.</title>
        <authorList>
            <person name="Lundby A."/>
            <person name="Secher A."/>
            <person name="Lage K."/>
            <person name="Nordsborg N.B."/>
            <person name="Dmytriyev A."/>
            <person name="Lundby C."/>
            <person name="Olsen J.V."/>
        </authorList>
    </citation>
    <scope>PHOSPHORYLATION [LARGE SCALE ANALYSIS] AT SER-76 AND THR-538</scope>
    <scope>IDENTIFICATION BY MASS SPECTROMETRY [LARGE SCALE ANALYSIS]</scope>
</reference>
<organism>
    <name type="scientific">Rattus norvegicus</name>
    <name type="common">Rat</name>
    <dbReference type="NCBI Taxonomy" id="10116"/>
    <lineage>
        <taxon>Eukaryota</taxon>
        <taxon>Metazoa</taxon>
        <taxon>Chordata</taxon>
        <taxon>Craniata</taxon>
        <taxon>Vertebrata</taxon>
        <taxon>Euteleostomi</taxon>
        <taxon>Mammalia</taxon>
        <taxon>Eutheria</taxon>
        <taxon>Euarchontoglires</taxon>
        <taxon>Glires</taxon>
        <taxon>Rodentia</taxon>
        <taxon>Myomorpha</taxon>
        <taxon>Muroidea</taxon>
        <taxon>Muridae</taxon>
        <taxon>Murinae</taxon>
        <taxon>Rattus</taxon>
    </lineage>
</organism>
<proteinExistence type="evidence at protein level"/>
<feature type="chain" id="PRO_0000255934" description="Heat shock 70 kDa protein 4">
    <location>
        <begin position="1"/>
        <end position="840"/>
    </location>
</feature>
<feature type="region of interest" description="Disordered" evidence="4">
    <location>
        <begin position="500"/>
        <end position="575"/>
    </location>
</feature>
<feature type="region of interest" description="Disordered" evidence="4">
    <location>
        <begin position="781"/>
        <end position="840"/>
    </location>
</feature>
<feature type="compositionally biased region" description="Basic and acidic residues" evidence="4">
    <location>
        <begin position="514"/>
        <end position="533"/>
    </location>
</feature>
<feature type="compositionally biased region" description="Basic and acidic residues" evidence="4">
    <location>
        <begin position="788"/>
        <end position="801"/>
    </location>
</feature>
<feature type="compositionally biased region" description="Basic and acidic residues" evidence="4">
    <location>
        <begin position="829"/>
        <end position="840"/>
    </location>
</feature>
<feature type="modified residue" description="N6-acetyllysine" evidence="3">
    <location>
        <position position="53"/>
    </location>
</feature>
<feature type="modified residue" description="Phosphoserine" evidence="7">
    <location>
        <position position="76"/>
    </location>
</feature>
<feature type="modified residue" description="Phosphotyrosine" evidence="2">
    <location>
        <position position="89"/>
    </location>
</feature>
<feature type="modified residue" description="Phosphotyrosine" evidence="2">
    <location>
        <position position="336"/>
    </location>
</feature>
<feature type="modified residue" description="Phosphoserine" evidence="2">
    <location>
        <position position="393"/>
    </location>
</feature>
<feature type="modified residue" description="Phosphoserine" evidence="3">
    <location>
        <position position="415"/>
    </location>
</feature>
<feature type="modified residue" description="N6-acetyllysine" evidence="2">
    <location>
        <position position="430"/>
    </location>
</feature>
<feature type="modified residue" description="Phosphothreonine" evidence="7">
    <location>
        <position position="538"/>
    </location>
</feature>
<feature type="modified residue" description="Phosphoserine" evidence="2">
    <location>
        <position position="546"/>
    </location>
</feature>
<feature type="modified residue" description="Phosphotyrosine" evidence="3">
    <location>
        <position position="660"/>
    </location>
</feature>
<feature type="modified residue" description="Phosphoserine" evidence="2">
    <location>
        <position position="756"/>
    </location>
</feature>
<feature type="modified residue" description="N6-methyllysine" evidence="2">
    <location>
        <position position="773"/>
    </location>
</feature>
<feature type="sequence conflict" description="In Ref. 2; AA sequence." evidence="6" ref="2">
    <original>EM</original>
    <variation>DF</variation>
    <location>
        <begin position="627"/>
        <end position="628"/>
    </location>
</feature>
<sequence length="840" mass="94057">MSVVGIDLGFQSCYVAVARAGGIETIANEYSDRCTPACVSFGPKNRSVGAAAKSQVISNAKNTVQGFKRFHGRAFSDPFVEAEKSNLAYDIVQLPTGLTGIKVTYMEEERNFTTEQVTAMLLSKLKETAESVLKKPVVDCVVSVPSFYTDAERRSVMDATQIAGLNCLRLMNETTAVALAYGIYKQDLPALEEKPRNVVFVDMGHSAYQVSVCAFNRGKLKVLATAFDTTLGGRKFDEVLVNHFCEEFGKKYKLDIKSKVRALLRLSQECEKLKKLMSANASDLPLSIECFMNDIDVSGTMNRGKFLEMCDDLLARVEPPLRSILDQSKLKKEDIYAVEIVGGATRIPAVKEKISKFFGKELSTTLNADEAVTRGCALQCAILSPAFKVREFSITDVVPYPISLRWNSPAEEGSSDCEVFPKNHAAPFSKVLTFYRKEPFTLEAYYSSPQDLPYPDPAIAQFSVQKVTPQSDGSSSKVKVKVRVNVHGIFSVSSAALVEVHKSEESEEPMETDQNAKEEEKMQVDQEEPHTEEQQPQTPAENKAESEEMETSQAGSKDKKMDQPPQAKKAKVKTSTVDLPIESQLLWQLDREMLGLYTENEGKMIMQDKLEKERNDAKNAVEEYVYEMRDKLSGEYEKFVSEDDRNNFTLKLEDTENWLYEDGEDQPKQVYVDKLAELRTLGQPIKTRFQESEERPKLFEELGKQIQQYMKVISSFKNKEDQYEHLDAADMTKVEKSTNEAMEWMNSKLNLQNKQSLTADPVVKTKEIEAKIKELTNICSPIISKPKPKVEPPKEEPKHAEQNGPVDGQGDNPGTQAAEHGADTAVPSDGDKKLPEMDID</sequence>
<name>HSP74_RAT</name>
<dbReference type="EMBL" id="AF077354">
    <property type="protein sequence ID" value="AAC27937.1"/>
    <property type="molecule type" value="mRNA"/>
</dbReference>
<dbReference type="RefSeq" id="NP_705893.1">
    <property type="nucleotide sequence ID" value="NM_153629.1"/>
</dbReference>
<dbReference type="SMR" id="O88600"/>
<dbReference type="BioGRID" id="251801">
    <property type="interactions" value="19"/>
</dbReference>
<dbReference type="FunCoup" id="O88600">
    <property type="interactions" value="3954"/>
</dbReference>
<dbReference type="IntAct" id="O88600">
    <property type="interactions" value="3"/>
</dbReference>
<dbReference type="MINT" id="O88600"/>
<dbReference type="STRING" id="10116.ENSRNOP00000023628"/>
<dbReference type="GlyGen" id="O88600">
    <property type="glycosylation" value="1 site, 1 O-linked glycan (1 site)"/>
</dbReference>
<dbReference type="iPTMnet" id="O88600"/>
<dbReference type="PhosphoSitePlus" id="O88600"/>
<dbReference type="SwissPalm" id="O88600"/>
<dbReference type="jPOST" id="O88600"/>
<dbReference type="PaxDb" id="10116-ENSRNOP00000023628"/>
<dbReference type="GeneID" id="266759"/>
<dbReference type="KEGG" id="rno:266759"/>
<dbReference type="UCSC" id="RGD:628878">
    <property type="organism name" value="rat"/>
</dbReference>
<dbReference type="AGR" id="RGD:628878"/>
<dbReference type="CTD" id="3308"/>
<dbReference type="RGD" id="628878">
    <property type="gene designation" value="Hspa4"/>
</dbReference>
<dbReference type="eggNOG" id="KOG0103">
    <property type="taxonomic scope" value="Eukaryota"/>
</dbReference>
<dbReference type="InParanoid" id="O88600"/>
<dbReference type="OrthoDB" id="434160at2759"/>
<dbReference type="PhylomeDB" id="O88600"/>
<dbReference type="Reactome" id="R-RNO-3371453">
    <property type="pathway name" value="Regulation of HSF1-mediated heat shock response"/>
</dbReference>
<dbReference type="ChiTaRS" id="Hspa4">
    <property type="organism name" value="rat"/>
</dbReference>
<dbReference type="PRO" id="PR:O88600"/>
<dbReference type="Proteomes" id="UP000002494">
    <property type="component" value="Unplaced"/>
</dbReference>
<dbReference type="GO" id="GO:0005829">
    <property type="term" value="C:cytosol"/>
    <property type="evidence" value="ECO:0000266"/>
    <property type="project" value="RGD"/>
</dbReference>
<dbReference type="GO" id="GO:0070062">
    <property type="term" value="C:extracellular exosome"/>
    <property type="evidence" value="ECO:0000266"/>
    <property type="project" value="RGD"/>
</dbReference>
<dbReference type="GO" id="GO:0005811">
    <property type="term" value="C:lipid droplet"/>
    <property type="evidence" value="ECO:0000314"/>
    <property type="project" value="RGD"/>
</dbReference>
<dbReference type="GO" id="GO:0005739">
    <property type="term" value="C:mitochondrion"/>
    <property type="evidence" value="ECO:0007669"/>
    <property type="project" value="GOC"/>
</dbReference>
<dbReference type="GO" id="GO:0005634">
    <property type="term" value="C:nucleus"/>
    <property type="evidence" value="ECO:0000318"/>
    <property type="project" value="GO_Central"/>
</dbReference>
<dbReference type="GO" id="GO:0000774">
    <property type="term" value="F:adenyl-nucleotide exchange factor activity"/>
    <property type="evidence" value="ECO:0000318"/>
    <property type="project" value="GO_Central"/>
</dbReference>
<dbReference type="GO" id="GO:0005524">
    <property type="term" value="F:ATP binding"/>
    <property type="evidence" value="ECO:0007669"/>
    <property type="project" value="UniProtKB-KW"/>
</dbReference>
<dbReference type="GO" id="GO:0140662">
    <property type="term" value="F:ATP-dependent protein folding chaperone"/>
    <property type="evidence" value="ECO:0007669"/>
    <property type="project" value="InterPro"/>
</dbReference>
<dbReference type="GO" id="GO:0044877">
    <property type="term" value="F:protein-containing complex binding"/>
    <property type="evidence" value="ECO:0000353"/>
    <property type="project" value="RGD"/>
</dbReference>
<dbReference type="GO" id="GO:0061629">
    <property type="term" value="F:RNA polymerase II-specific DNA-binding transcription factor binding"/>
    <property type="evidence" value="ECO:0000353"/>
    <property type="project" value="RGD"/>
</dbReference>
<dbReference type="GO" id="GO:0051131">
    <property type="term" value="P:chaperone-mediated protein complex assembly"/>
    <property type="evidence" value="ECO:0000266"/>
    <property type="project" value="RGD"/>
</dbReference>
<dbReference type="GO" id="GO:0001822">
    <property type="term" value="P:kidney development"/>
    <property type="evidence" value="ECO:0000270"/>
    <property type="project" value="RGD"/>
</dbReference>
<dbReference type="GO" id="GO:0043066">
    <property type="term" value="P:negative regulation of apoptotic process"/>
    <property type="evidence" value="ECO:0000270"/>
    <property type="project" value="RGD"/>
</dbReference>
<dbReference type="GO" id="GO:0010629">
    <property type="term" value="P:negative regulation of gene expression"/>
    <property type="evidence" value="ECO:0000315"/>
    <property type="project" value="RGD"/>
</dbReference>
<dbReference type="GO" id="GO:0051402">
    <property type="term" value="P:neuron apoptotic process"/>
    <property type="evidence" value="ECO:0000315"/>
    <property type="project" value="RGD"/>
</dbReference>
<dbReference type="GO" id="GO:0045766">
    <property type="term" value="P:positive regulation of angiogenesis"/>
    <property type="evidence" value="ECO:0000270"/>
    <property type="project" value="RGD"/>
</dbReference>
<dbReference type="GO" id="GO:0006457">
    <property type="term" value="P:protein folding"/>
    <property type="evidence" value="ECO:0000318"/>
    <property type="project" value="GO_Central"/>
</dbReference>
<dbReference type="GO" id="GO:0045040">
    <property type="term" value="P:protein insertion into mitochondrial outer membrane"/>
    <property type="evidence" value="ECO:0000266"/>
    <property type="project" value="RGD"/>
</dbReference>
<dbReference type="GO" id="GO:1903978">
    <property type="term" value="P:regulation of microglial cell activation"/>
    <property type="evidence" value="ECO:0000315"/>
    <property type="project" value="RGD"/>
</dbReference>
<dbReference type="CDD" id="cd11737">
    <property type="entry name" value="ASKHA_NBD_HSP70_HSPA4"/>
    <property type="match status" value="1"/>
</dbReference>
<dbReference type="FunFam" id="1.20.1270.10:FF:000002">
    <property type="entry name" value="Heat shock 70 kDa protein 4"/>
    <property type="match status" value="1"/>
</dbReference>
<dbReference type="FunFam" id="3.30.30.30:FF:000002">
    <property type="entry name" value="Heat shock 70 kDa protein 4"/>
    <property type="match status" value="1"/>
</dbReference>
<dbReference type="FunFam" id="3.30.420.40:FF:000171">
    <property type="entry name" value="Heat shock 70 kDa protein 4"/>
    <property type="match status" value="1"/>
</dbReference>
<dbReference type="FunFam" id="3.90.640.10:FF:000004">
    <property type="entry name" value="Heat shock 70 kDa protein 4"/>
    <property type="match status" value="1"/>
</dbReference>
<dbReference type="FunFam" id="1.20.1270.10:FF:000018">
    <property type="entry name" value="heat shock 70 kDa protein 4 isoform X1"/>
    <property type="match status" value="1"/>
</dbReference>
<dbReference type="FunFam" id="2.60.34.10:FF:000010">
    <property type="entry name" value="heat shock 70 kDa protein 4 isoform X1"/>
    <property type="match status" value="1"/>
</dbReference>
<dbReference type="FunFam" id="3.30.420.40:FF:000495">
    <property type="entry name" value="Heat shock protein 4b"/>
    <property type="match status" value="1"/>
</dbReference>
<dbReference type="FunFam" id="3.30.420.40:FF:000767">
    <property type="entry name" value="Heat shock protein 70 (HSP70)-4, putative"/>
    <property type="match status" value="2"/>
</dbReference>
<dbReference type="Gene3D" id="1.20.1270.10">
    <property type="match status" value="2"/>
</dbReference>
<dbReference type="Gene3D" id="3.30.30.30">
    <property type="match status" value="1"/>
</dbReference>
<dbReference type="Gene3D" id="3.30.420.40">
    <property type="match status" value="2"/>
</dbReference>
<dbReference type="Gene3D" id="3.90.640.10">
    <property type="entry name" value="Actin, Chain A, domain 4"/>
    <property type="match status" value="1"/>
</dbReference>
<dbReference type="Gene3D" id="2.60.34.10">
    <property type="entry name" value="Substrate Binding Domain Of DNAk, Chain A, domain 1"/>
    <property type="match status" value="1"/>
</dbReference>
<dbReference type="InterPro" id="IPR043129">
    <property type="entry name" value="ATPase_NBD"/>
</dbReference>
<dbReference type="InterPro" id="IPR018181">
    <property type="entry name" value="Heat_shock_70_CS"/>
</dbReference>
<dbReference type="InterPro" id="IPR029048">
    <property type="entry name" value="HSP70_C_sf"/>
</dbReference>
<dbReference type="InterPro" id="IPR029047">
    <property type="entry name" value="HSP70_peptide-bd_sf"/>
</dbReference>
<dbReference type="InterPro" id="IPR013126">
    <property type="entry name" value="Hsp_70_fam"/>
</dbReference>
<dbReference type="InterPro" id="IPR042052">
    <property type="entry name" value="HSPA4_NBD"/>
</dbReference>
<dbReference type="PANTHER" id="PTHR45639:SF6">
    <property type="entry name" value="HEAT SHOCK 70 KDA PROTEIN 4"/>
    <property type="match status" value="1"/>
</dbReference>
<dbReference type="PANTHER" id="PTHR45639">
    <property type="entry name" value="HSC70CB, ISOFORM G-RELATED"/>
    <property type="match status" value="1"/>
</dbReference>
<dbReference type="Pfam" id="PF00012">
    <property type="entry name" value="HSP70"/>
    <property type="match status" value="2"/>
</dbReference>
<dbReference type="PRINTS" id="PR00301">
    <property type="entry name" value="HEATSHOCK70"/>
</dbReference>
<dbReference type="SUPFAM" id="SSF53067">
    <property type="entry name" value="Actin-like ATPase domain"/>
    <property type="match status" value="2"/>
</dbReference>
<dbReference type="SUPFAM" id="SSF100934">
    <property type="entry name" value="Heat shock protein 70kD (HSP70), C-terminal subdomain"/>
    <property type="match status" value="2"/>
</dbReference>
<dbReference type="SUPFAM" id="SSF100920">
    <property type="entry name" value="Heat shock protein 70kD (HSP70), peptide-binding domain"/>
    <property type="match status" value="1"/>
</dbReference>
<dbReference type="PROSITE" id="PS00329">
    <property type="entry name" value="HSP70_2"/>
    <property type="match status" value="1"/>
</dbReference>
<dbReference type="PROSITE" id="PS01036">
    <property type="entry name" value="HSP70_3"/>
    <property type="match status" value="1"/>
</dbReference>
<protein>
    <recommendedName>
        <fullName>Heat shock 70 kDa protein 4</fullName>
    </recommendedName>
    <alternativeName>
        <fullName>Ischemia responsive 94 kDa protein</fullName>
    </alternativeName>
</protein>
<accession>O88600</accession>
<comment type="subunit">
    <text evidence="1">Interacts with TJP1/ZO-1.</text>
</comment>
<comment type="subcellular location">
    <subcellularLocation>
        <location evidence="6">Cytoplasm</location>
    </subcellularLocation>
</comment>
<comment type="tissue specificity">
    <text evidence="5">Ubiquitous. Highly expressed in testis.</text>
</comment>
<comment type="induction">
    <text evidence="5">Up-regulated in neuronal cells upon ischemia.</text>
</comment>
<comment type="similarity">
    <text evidence="6">Belongs to the heat shock protein 70 family.</text>
</comment>
<evidence type="ECO:0000250" key="1"/>
<evidence type="ECO:0000250" key="2">
    <source>
        <dbReference type="UniProtKB" id="P34932"/>
    </source>
</evidence>
<evidence type="ECO:0000250" key="3">
    <source>
        <dbReference type="UniProtKB" id="Q61316"/>
    </source>
</evidence>
<evidence type="ECO:0000256" key="4">
    <source>
        <dbReference type="SAM" id="MobiDB-lite"/>
    </source>
</evidence>
<evidence type="ECO:0000269" key="5">
    <source>
    </source>
</evidence>
<evidence type="ECO:0000305" key="6"/>
<evidence type="ECO:0007744" key="7">
    <source>
    </source>
</evidence>
<gene>
    <name type="primary">Hspa4</name>
    <name evidence="2" type="synonym">Hsph2</name>
    <name type="synonym">Irp94</name>
</gene>